<feature type="chain" id="PRO_1000056751" description="UPF0225 protein YPN_1639">
    <location>
        <begin position="1"/>
        <end position="154"/>
    </location>
</feature>
<proteinExistence type="inferred from homology"/>
<accession>Q1CJ62</accession>
<accession>C4GSS9</accession>
<organism>
    <name type="scientific">Yersinia pestis bv. Antiqua (strain Nepal516)</name>
    <dbReference type="NCBI Taxonomy" id="377628"/>
    <lineage>
        <taxon>Bacteria</taxon>
        <taxon>Pseudomonadati</taxon>
        <taxon>Pseudomonadota</taxon>
        <taxon>Gammaproteobacteria</taxon>
        <taxon>Enterobacterales</taxon>
        <taxon>Yersiniaceae</taxon>
        <taxon>Yersinia</taxon>
    </lineage>
</organism>
<protein>
    <recommendedName>
        <fullName evidence="1">UPF0225 protein YPN_1639</fullName>
    </recommendedName>
</protein>
<gene>
    <name type="ordered locus">YPN_1639</name>
    <name type="ORF">YP516_1824</name>
</gene>
<dbReference type="EMBL" id="CP000305">
    <property type="protein sequence ID" value="ABG17968.1"/>
    <property type="molecule type" value="Genomic_DNA"/>
</dbReference>
<dbReference type="EMBL" id="ACNQ01000009">
    <property type="protein sequence ID" value="EEO77089.1"/>
    <property type="molecule type" value="Genomic_DNA"/>
</dbReference>
<dbReference type="RefSeq" id="WP_002210666.1">
    <property type="nucleotide sequence ID" value="NZ_ACNQ01000009.1"/>
</dbReference>
<dbReference type="SMR" id="Q1CJ62"/>
<dbReference type="KEGG" id="ypn:YPN_1639"/>
<dbReference type="HOGENOM" id="CLU_099590_0_0_6"/>
<dbReference type="Proteomes" id="UP000008936">
    <property type="component" value="Chromosome"/>
</dbReference>
<dbReference type="Gene3D" id="3.10.450.50">
    <property type="match status" value="1"/>
</dbReference>
<dbReference type="HAMAP" id="MF_00612">
    <property type="entry name" value="UPF0225"/>
    <property type="match status" value="1"/>
</dbReference>
<dbReference type="InterPro" id="IPR032710">
    <property type="entry name" value="NTF2-like_dom_sf"/>
</dbReference>
<dbReference type="InterPro" id="IPR004027">
    <property type="entry name" value="SEC_C_motif"/>
</dbReference>
<dbReference type="InterPro" id="IPR023006">
    <property type="entry name" value="UPF0225"/>
</dbReference>
<dbReference type="InterPro" id="IPR048469">
    <property type="entry name" value="YchJ-like_M"/>
</dbReference>
<dbReference type="NCBIfam" id="NF002449">
    <property type="entry name" value="PRK01617.1"/>
    <property type="match status" value="1"/>
</dbReference>
<dbReference type="NCBIfam" id="NF002486">
    <property type="entry name" value="PRK01752.1"/>
    <property type="match status" value="1"/>
</dbReference>
<dbReference type="PANTHER" id="PTHR33747:SF1">
    <property type="entry name" value="ADENYLATE CYCLASE-ASSOCIATED CAP C-TERMINAL DOMAIN-CONTAINING PROTEIN"/>
    <property type="match status" value="1"/>
</dbReference>
<dbReference type="PANTHER" id="PTHR33747">
    <property type="entry name" value="UPF0225 PROTEIN SCO1677"/>
    <property type="match status" value="1"/>
</dbReference>
<dbReference type="Pfam" id="PF02810">
    <property type="entry name" value="SEC-C"/>
    <property type="match status" value="2"/>
</dbReference>
<dbReference type="Pfam" id="PF17775">
    <property type="entry name" value="YchJ_M-like"/>
    <property type="match status" value="1"/>
</dbReference>
<dbReference type="SUPFAM" id="SSF54427">
    <property type="entry name" value="NTF2-like"/>
    <property type="match status" value="1"/>
</dbReference>
<dbReference type="SUPFAM" id="SSF103642">
    <property type="entry name" value="Sec-C motif"/>
    <property type="match status" value="1"/>
</dbReference>
<sequence length="154" mass="17623">MSELCPCGSILNYHECCGPYILGTQVAAKPAILMRSRYCAYVEKNVDYLIATWHPDCHAQEWRESIIQGFTKTVWHGLTVIAETPGRHPDEAFVEFIARFTDADNAQITAMHERSRFLRIKEHWYYIDGIRPSLGRNDTCLCGSGKKHKKCCGR</sequence>
<evidence type="ECO:0000255" key="1">
    <source>
        <dbReference type="HAMAP-Rule" id="MF_00612"/>
    </source>
</evidence>
<name>Y1639_YERPN</name>
<reference key="1">
    <citation type="journal article" date="2006" name="J. Bacteriol.">
        <title>Complete genome sequence of Yersinia pestis strains Antiqua and Nepal516: evidence of gene reduction in an emerging pathogen.</title>
        <authorList>
            <person name="Chain P.S.G."/>
            <person name="Hu P."/>
            <person name="Malfatti S.A."/>
            <person name="Radnedge L."/>
            <person name="Larimer F."/>
            <person name="Vergez L.M."/>
            <person name="Worsham P."/>
            <person name="Chu M.C."/>
            <person name="Andersen G.L."/>
        </authorList>
    </citation>
    <scope>NUCLEOTIDE SEQUENCE [LARGE SCALE GENOMIC DNA]</scope>
    <source>
        <strain>Nepal516</strain>
    </source>
</reference>
<reference key="2">
    <citation type="submission" date="2009-04" db="EMBL/GenBank/DDBJ databases">
        <title>Yersinia pestis Nepal516A whole genome shotgun sequencing project.</title>
        <authorList>
            <person name="Plunkett G. III"/>
            <person name="Anderson B.D."/>
            <person name="Baumler D.J."/>
            <person name="Burland V."/>
            <person name="Cabot E.L."/>
            <person name="Glasner J.D."/>
            <person name="Mau B."/>
            <person name="Neeno-Eckwall E."/>
            <person name="Perna N.T."/>
            <person name="Munk A.C."/>
            <person name="Tapia R."/>
            <person name="Green L.D."/>
            <person name="Rogers Y.C."/>
            <person name="Detter J.C."/>
            <person name="Bruce D.C."/>
            <person name="Brettin T.S."/>
        </authorList>
    </citation>
    <scope>NUCLEOTIDE SEQUENCE [LARGE SCALE GENOMIC DNA]</scope>
    <source>
        <strain>Nepal516</strain>
    </source>
</reference>
<comment type="similarity">
    <text evidence="1">Belongs to the UPF0225 family.</text>
</comment>